<dbReference type="EMBL" id="JF411744">
    <property type="protein sequence ID" value="AAC96831.1"/>
    <property type="molecule type" value="Genomic_DNA"/>
</dbReference>
<dbReference type="PIR" id="T17966">
    <property type="entry name" value="T17966"/>
</dbReference>
<dbReference type="RefSeq" id="NP_048820.1">
    <property type="nucleotide sequence ID" value="NC_000852.5"/>
</dbReference>
<dbReference type="SMR" id="Q98514"/>
<dbReference type="GeneID" id="918226"/>
<dbReference type="KEGG" id="vg:918226"/>
<dbReference type="OrthoDB" id="7427at10239"/>
<dbReference type="Proteomes" id="UP000000862">
    <property type="component" value="Genome"/>
</dbReference>
<dbReference type="GO" id="GO:0003725">
    <property type="term" value="F:double-stranded RNA binding"/>
    <property type="evidence" value="ECO:0007669"/>
    <property type="project" value="TreeGrafter"/>
</dbReference>
<dbReference type="GO" id="GO:0004525">
    <property type="term" value="F:ribonuclease III activity"/>
    <property type="evidence" value="ECO:0007669"/>
    <property type="project" value="InterPro"/>
</dbReference>
<dbReference type="GO" id="GO:0010468">
    <property type="term" value="P:regulation of gene expression"/>
    <property type="evidence" value="ECO:0007669"/>
    <property type="project" value="TreeGrafter"/>
</dbReference>
<dbReference type="GO" id="GO:0006364">
    <property type="term" value="P:rRNA processing"/>
    <property type="evidence" value="ECO:0007669"/>
    <property type="project" value="InterPro"/>
</dbReference>
<dbReference type="CDD" id="cd10845">
    <property type="entry name" value="DSRM_RNAse_III_family"/>
    <property type="match status" value="1"/>
</dbReference>
<dbReference type="CDD" id="cd00593">
    <property type="entry name" value="RIBOc"/>
    <property type="match status" value="1"/>
</dbReference>
<dbReference type="Gene3D" id="3.30.160.20">
    <property type="match status" value="1"/>
</dbReference>
<dbReference type="Gene3D" id="1.10.1520.10">
    <property type="entry name" value="Ribonuclease III domain"/>
    <property type="match status" value="1"/>
</dbReference>
<dbReference type="HAMAP" id="MF_00104">
    <property type="entry name" value="RNase_III"/>
    <property type="match status" value="1"/>
</dbReference>
<dbReference type="InterPro" id="IPR014720">
    <property type="entry name" value="dsRBD_dom"/>
</dbReference>
<dbReference type="InterPro" id="IPR011907">
    <property type="entry name" value="RNase_III"/>
</dbReference>
<dbReference type="InterPro" id="IPR000999">
    <property type="entry name" value="RNase_III_dom"/>
</dbReference>
<dbReference type="InterPro" id="IPR036389">
    <property type="entry name" value="RNase_III_sf"/>
</dbReference>
<dbReference type="NCBIfam" id="TIGR02191">
    <property type="entry name" value="RNaseIII"/>
    <property type="match status" value="1"/>
</dbReference>
<dbReference type="PANTHER" id="PTHR11207:SF0">
    <property type="entry name" value="RIBONUCLEASE 3"/>
    <property type="match status" value="1"/>
</dbReference>
<dbReference type="PANTHER" id="PTHR11207">
    <property type="entry name" value="RIBONUCLEASE III"/>
    <property type="match status" value="1"/>
</dbReference>
<dbReference type="Pfam" id="PF00035">
    <property type="entry name" value="dsrm"/>
    <property type="match status" value="1"/>
</dbReference>
<dbReference type="Pfam" id="PF14622">
    <property type="entry name" value="Ribonucleas_3_3"/>
    <property type="match status" value="1"/>
</dbReference>
<dbReference type="SMART" id="SM00358">
    <property type="entry name" value="DSRM"/>
    <property type="match status" value="1"/>
</dbReference>
<dbReference type="SMART" id="SM00535">
    <property type="entry name" value="RIBOc"/>
    <property type="match status" value="1"/>
</dbReference>
<dbReference type="SUPFAM" id="SSF54768">
    <property type="entry name" value="dsRNA-binding domain-like"/>
    <property type="match status" value="1"/>
</dbReference>
<dbReference type="SUPFAM" id="SSF69065">
    <property type="entry name" value="RNase III domain-like"/>
    <property type="match status" value="1"/>
</dbReference>
<dbReference type="PROSITE" id="PS50137">
    <property type="entry name" value="DS_RBD"/>
    <property type="match status" value="1"/>
</dbReference>
<dbReference type="PROSITE" id="PS00517">
    <property type="entry name" value="RNASE_3_1"/>
    <property type="match status" value="1"/>
</dbReference>
<dbReference type="PROSITE" id="PS50142">
    <property type="entry name" value="RNASE_3_2"/>
    <property type="match status" value="1"/>
</dbReference>
<organismHost>
    <name type="scientific">Chlorella</name>
    <dbReference type="NCBI Taxonomy" id="3071"/>
</organismHost>
<comment type="similarity">
    <text evidence="1">Belongs to the ribonuclease III family.</text>
</comment>
<organism>
    <name type="scientific">Paramecium bursaria Chlorella virus 1</name>
    <name type="common">PBCV-1</name>
    <dbReference type="NCBI Taxonomy" id="10506"/>
    <lineage>
        <taxon>Viruses</taxon>
        <taxon>Varidnaviria</taxon>
        <taxon>Bamfordvirae</taxon>
        <taxon>Nucleocytoviricota</taxon>
        <taxon>Megaviricetes</taxon>
        <taxon>Algavirales</taxon>
        <taxon>Phycodnaviridae</taxon>
        <taxon>Chlorovirus</taxon>
    </lineage>
</organism>
<feature type="chain" id="PRO_0000180465" description="Putative protein A464R">
    <location>
        <begin position="1"/>
        <end position="275"/>
    </location>
</feature>
<feature type="domain" description="RNase III">
    <location>
        <begin position="51"/>
        <end position="175"/>
    </location>
</feature>
<feature type="domain" description="DRBM">
    <location>
        <begin position="201"/>
        <end position="269"/>
    </location>
</feature>
<proteinExistence type="inferred from homology"/>
<name>A464_PBCV1</name>
<protein>
    <recommendedName>
        <fullName>Putative protein A464R</fullName>
    </recommendedName>
</protein>
<keyword id="KW-0255">Endonuclease</keyword>
<keyword id="KW-0378">Hydrolase</keyword>
<keyword id="KW-0540">Nuclease</keyword>
<keyword id="KW-1185">Reference proteome</keyword>
<keyword id="KW-0694">RNA-binding</keyword>
<reference key="1">
    <citation type="journal article" date="1996" name="Virology">
        <title>Analysis of 76 kb of the chlorella virus PBCV-1 330-kb genome: map positions 182 to 258.</title>
        <authorList>
            <person name="Kutish G.F."/>
            <person name="Li Y."/>
            <person name="Lu Z."/>
            <person name="Furuta M."/>
            <person name="Rock D.L."/>
            <person name="van Etten J.L."/>
        </authorList>
    </citation>
    <scope>NUCLEOTIDE SEQUENCE [LARGE SCALE GENOMIC DNA]</scope>
</reference>
<sequence length="275" mass="31170">MENISKCMERGTTVGTMMVSERFKDQVQIPNTDDNFPEGPPSTKSGVMFTKEDVEYLIGMPIIDFSYYKTAFSYNAIVEGEATYERMEFVGDSVLGFIIARYLYDNFPGKDEGFLSRLRTKFVSGKFLSSIALRMGLHNYVIMHQKGLYRGWNTNPRILEDVFEALMGAIYFDLGINAAKQFFMTTLAKYADMQSLMLDTNYKDRLLKHTRKVELPRPEFVSVFEKGGANPSFIVDVVINGQKISTGTGKSRKDAEQNASKIALHTMGVPEEFIH</sequence>
<accession>Q98514</accession>
<evidence type="ECO:0000305" key="1"/>
<gene>
    <name type="ordered locus">A464R</name>
</gene>